<evidence type="ECO:0000255" key="1">
    <source>
        <dbReference type="HAMAP-Rule" id="MF_01850"/>
    </source>
</evidence>
<accession>B2S568</accession>
<dbReference type="EC" id="2.8.1.-" evidence="1"/>
<dbReference type="EMBL" id="CP000887">
    <property type="protein sequence ID" value="ACD72315.1"/>
    <property type="molecule type" value="Genomic_DNA"/>
</dbReference>
<dbReference type="RefSeq" id="WP_002969416.1">
    <property type="nucleotide sequence ID" value="NC_010742.1"/>
</dbReference>
<dbReference type="SMR" id="B2S568"/>
<dbReference type="GeneID" id="93016786"/>
<dbReference type="KEGG" id="bmc:BAbS19_I07940"/>
<dbReference type="HOGENOM" id="CLU_026481_0_0_5"/>
<dbReference type="Proteomes" id="UP000002565">
    <property type="component" value="Chromosome 1"/>
</dbReference>
<dbReference type="GO" id="GO:0005737">
    <property type="term" value="C:cytoplasm"/>
    <property type="evidence" value="ECO:0007669"/>
    <property type="project" value="UniProtKB-SubCell"/>
</dbReference>
<dbReference type="GO" id="GO:0051539">
    <property type="term" value="F:4 iron, 4 sulfur cluster binding"/>
    <property type="evidence" value="ECO:0007669"/>
    <property type="project" value="UniProtKB-UniRule"/>
</dbReference>
<dbReference type="GO" id="GO:0005524">
    <property type="term" value="F:ATP binding"/>
    <property type="evidence" value="ECO:0007669"/>
    <property type="project" value="UniProtKB-UniRule"/>
</dbReference>
<dbReference type="GO" id="GO:0000287">
    <property type="term" value="F:magnesium ion binding"/>
    <property type="evidence" value="ECO:0007669"/>
    <property type="project" value="UniProtKB-UniRule"/>
</dbReference>
<dbReference type="GO" id="GO:0016783">
    <property type="term" value="F:sulfurtransferase activity"/>
    <property type="evidence" value="ECO:0007669"/>
    <property type="project" value="UniProtKB-UniRule"/>
</dbReference>
<dbReference type="GO" id="GO:0000049">
    <property type="term" value="F:tRNA binding"/>
    <property type="evidence" value="ECO:0007669"/>
    <property type="project" value="UniProtKB-KW"/>
</dbReference>
<dbReference type="GO" id="GO:0034227">
    <property type="term" value="P:tRNA thio-modification"/>
    <property type="evidence" value="ECO:0007669"/>
    <property type="project" value="UniProtKB-UniRule"/>
</dbReference>
<dbReference type="CDD" id="cd24138">
    <property type="entry name" value="TtcA-like"/>
    <property type="match status" value="1"/>
</dbReference>
<dbReference type="Gene3D" id="3.40.50.620">
    <property type="entry name" value="HUPs"/>
    <property type="match status" value="1"/>
</dbReference>
<dbReference type="HAMAP" id="MF_01850">
    <property type="entry name" value="TtcA"/>
    <property type="match status" value="1"/>
</dbReference>
<dbReference type="InterPro" id="IPR014729">
    <property type="entry name" value="Rossmann-like_a/b/a_fold"/>
</dbReference>
<dbReference type="InterPro" id="IPR011063">
    <property type="entry name" value="TilS/TtcA_N"/>
</dbReference>
<dbReference type="InterPro" id="IPR012089">
    <property type="entry name" value="tRNA_Cyd_32_2_STrfase"/>
</dbReference>
<dbReference type="InterPro" id="IPR035107">
    <property type="entry name" value="tRNA_thiolation_TtcA_Ctu1"/>
</dbReference>
<dbReference type="NCBIfam" id="NF007972">
    <property type="entry name" value="PRK10696.1"/>
    <property type="match status" value="1"/>
</dbReference>
<dbReference type="PANTHER" id="PTHR43686:SF1">
    <property type="entry name" value="AMINOTRAN_5 DOMAIN-CONTAINING PROTEIN"/>
    <property type="match status" value="1"/>
</dbReference>
<dbReference type="PANTHER" id="PTHR43686">
    <property type="entry name" value="SULFURTRANSFERASE-RELATED"/>
    <property type="match status" value="1"/>
</dbReference>
<dbReference type="Pfam" id="PF01171">
    <property type="entry name" value="ATP_bind_3"/>
    <property type="match status" value="1"/>
</dbReference>
<dbReference type="PIRSF" id="PIRSF004976">
    <property type="entry name" value="ATPase_YdaO"/>
    <property type="match status" value="1"/>
</dbReference>
<dbReference type="SUPFAM" id="SSF52402">
    <property type="entry name" value="Adenine nucleotide alpha hydrolases-like"/>
    <property type="match status" value="1"/>
</dbReference>
<gene>
    <name evidence="1" type="primary">ttcA</name>
    <name type="ordered locus">BAbS19_I07940</name>
</gene>
<keyword id="KW-0004">4Fe-4S</keyword>
<keyword id="KW-0067">ATP-binding</keyword>
<keyword id="KW-0963">Cytoplasm</keyword>
<keyword id="KW-0408">Iron</keyword>
<keyword id="KW-0411">Iron-sulfur</keyword>
<keyword id="KW-0460">Magnesium</keyword>
<keyword id="KW-0479">Metal-binding</keyword>
<keyword id="KW-0547">Nucleotide-binding</keyword>
<keyword id="KW-0694">RNA-binding</keyword>
<keyword id="KW-0808">Transferase</keyword>
<keyword id="KW-0819">tRNA processing</keyword>
<keyword id="KW-0820">tRNA-binding</keyword>
<name>TTCA_BRUA1</name>
<reference key="1">
    <citation type="journal article" date="2008" name="PLoS ONE">
        <title>Genome sequence of Brucella abortus vaccine strain S19 compared to virulent strains yields candidate virulence genes.</title>
        <authorList>
            <person name="Crasta O.R."/>
            <person name="Folkerts O."/>
            <person name="Fei Z."/>
            <person name="Mane S.P."/>
            <person name="Evans C."/>
            <person name="Martino-Catt S."/>
            <person name="Bricker B."/>
            <person name="Yu G."/>
            <person name="Du L."/>
            <person name="Sobral B.W."/>
        </authorList>
    </citation>
    <scope>NUCLEOTIDE SEQUENCE [LARGE SCALE GENOMIC DNA]</scope>
    <source>
        <strain>S19</strain>
    </source>
</reference>
<organism>
    <name type="scientific">Brucella abortus (strain S19)</name>
    <dbReference type="NCBI Taxonomy" id="430066"/>
    <lineage>
        <taxon>Bacteria</taxon>
        <taxon>Pseudomonadati</taxon>
        <taxon>Pseudomonadota</taxon>
        <taxon>Alphaproteobacteria</taxon>
        <taxon>Hyphomicrobiales</taxon>
        <taxon>Brucellaceae</taxon>
        <taxon>Brucella/Ochrobactrum group</taxon>
        <taxon>Brucella</taxon>
    </lineage>
</organism>
<feature type="chain" id="PRO_1000188627" description="tRNA-cytidine(32) 2-sulfurtransferase">
    <location>
        <begin position="1"/>
        <end position="293"/>
    </location>
</feature>
<feature type="short sequence motif" description="PP-loop motif" evidence="1">
    <location>
        <begin position="62"/>
        <end position="67"/>
    </location>
</feature>
<feature type="binding site" evidence="1">
    <location>
        <position position="137"/>
    </location>
    <ligand>
        <name>[4Fe-4S] cluster</name>
        <dbReference type="ChEBI" id="CHEBI:49883"/>
    </ligand>
</feature>
<feature type="binding site" evidence="1">
    <location>
        <position position="140"/>
    </location>
    <ligand>
        <name>[4Fe-4S] cluster</name>
        <dbReference type="ChEBI" id="CHEBI:49883"/>
    </ligand>
</feature>
<feature type="binding site" evidence="1">
    <location>
        <position position="228"/>
    </location>
    <ligand>
        <name>[4Fe-4S] cluster</name>
        <dbReference type="ChEBI" id="CHEBI:49883"/>
    </ligand>
</feature>
<protein>
    <recommendedName>
        <fullName evidence="1">tRNA-cytidine(32) 2-sulfurtransferase</fullName>
        <ecNumber evidence="1">2.8.1.-</ecNumber>
    </recommendedName>
    <alternativeName>
        <fullName evidence="1">Two-thiocytidine biosynthesis protein A</fullName>
    </alternativeName>
    <alternativeName>
        <fullName evidence="1">tRNA 2-thiocytidine biosynthesis protein TtcA</fullName>
    </alternativeName>
</protein>
<comment type="function">
    <text evidence="1">Catalyzes the ATP-dependent 2-thiolation of cytidine in position 32 of tRNA, to form 2-thiocytidine (s(2)C32). The sulfur atoms are provided by the cysteine/cysteine desulfurase (IscS) system.</text>
</comment>
<comment type="catalytic activity">
    <reaction evidence="1">
        <text>cytidine(32) in tRNA + S-sulfanyl-L-cysteinyl-[cysteine desulfurase] + AH2 + ATP = 2-thiocytidine(32) in tRNA + L-cysteinyl-[cysteine desulfurase] + A + AMP + diphosphate + H(+)</text>
        <dbReference type="Rhea" id="RHEA:57048"/>
        <dbReference type="Rhea" id="RHEA-COMP:10288"/>
        <dbReference type="Rhea" id="RHEA-COMP:12157"/>
        <dbReference type="Rhea" id="RHEA-COMP:12158"/>
        <dbReference type="Rhea" id="RHEA-COMP:14821"/>
        <dbReference type="ChEBI" id="CHEBI:13193"/>
        <dbReference type="ChEBI" id="CHEBI:15378"/>
        <dbReference type="ChEBI" id="CHEBI:17499"/>
        <dbReference type="ChEBI" id="CHEBI:29950"/>
        <dbReference type="ChEBI" id="CHEBI:30616"/>
        <dbReference type="ChEBI" id="CHEBI:33019"/>
        <dbReference type="ChEBI" id="CHEBI:61963"/>
        <dbReference type="ChEBI" id="CHEBI:82748"/>
        <dbReference type="ChEBI" id="CHEBI:141453"/>
        <dbReference type="ChEBI" id="CHEBI:456215"/>
    </reaction>
    <physiologicalReaction direction="left-to-right" evidence="1">
        <dbReference type="Rhea" id="RHEA:57049"/>
    </physiologicalReaction>
</comment>
<comment type="cofactor">
    <cofactor evidence="1">
        <name>Mg(2+)</name>
        <dbReference type="ChEBI" id="CHEBI:18420"/>
    </cofactor>
</comment>
<comment type="cofactor">
    <cofactor evidence="1">
        <name>[4Fe-4S] cluster</name>
        <dbReference type="ChEBI" id="CHEBI:49883"/>
    </cofactor>
    <text evidence="1">Binds 1 [4Fe-4S] cluster per subunit. The cluster is chelated by three Cys residues, the fourth Fe has a free coordination site that may bind a sulfur atom transferred from the persulfide of IscS.</text>
</comment>
<comment type="pathway">
    <text evidence="1">tRNA modification.</text>
</comment>
<comment type="subunit">
    <text evidence="1">Homodimer.</text>
</comment>
<comment type="subcellular location">
    <subcellularLocation>
        <location evidence="1">Cytoplasm</location>
    </subcellularLocation>
</comment>
<comment type="miscellaneous">
    <text evidence="1">The thiolation reaction likely consists of two steps: a first activation step by ATP to form an adenylated intermediate of the target base of tRNA, and a second nucleophilic substitution step of the sulfur (S) atom supplied by the hydrosulfide attached to the Fe-S cluster.</text>
</comment>
<comment type="similarity">
    <text evidence="1">Belongs to the TtcA family.</text>
</comment>
<sequence length="293" mass="33259">MNAFDADITEHADSSGCHPLFRDVPATVEFNKLRKRLLRLTRQAIEDFAMVKPGDRWMVCLSGGKDSYGLLALLLDLKWRGLLPVELLAVNLDQGQPNFPKHILPDFLTRYGIEHRIEYQDTYSIVTDKLPETSTYCSLCSRLRRGNLYRIAREEGCSAIVLGHHREDILETFFMNLFHGGRLAAMPPKLLNDEGDLMVFRPLAYAAEDDLEKFANAMQFPIIPCDLCGSQDGLQRNAMKAMLIDIEKRMPGRKDTMIRALTNVRPSHLLDRKLFDFAGLMANGEKGSDDALW</sequence>
<proteinExistence type="inferred from homology"/>